<proteinExistence type="inferred from homology"/>
<reference key="1">
    <citation type="submission" date="2007-02" db="EMBL/GenBank/DDBJ databases">
        <title>Complete sequence of chromosome 1 of Rhodobacter sphaeroides ATCC 17029.</title>
        <authorList>
            <person name="Copeland A."/>
            <person name="Lucas S."/>
            <person name="Lapidus A."/>
            <person name="Barry K."/>
            <person name="Detter J.C."/>
            <person name="Glavina del Rio T."/>
            <person name="Hammon N."/>
            <person name="Israni S."/>
            <person name="Dalin E."/>
            <person name="Tice H."/>
            <person name="Pitluck S."/>
            <person name="Kiss H."/>
            <person name="Brettin T."/>
            <person name="Bruce D."/>
            <person name="Han C."/>
            <person name="Tapia R."/>
            <person name="Gilna P."/>
            <person name="Schmutz J."/>
            <person name="Larimer F."/>
            <person name="Land M."/>
            <person name="Hauser L."/>
            <person name="Kyrpides N."/>
            <person name="Mikhailova N."/>
            <person name="Richardson P."/>
            <person name="Mackenzie C."/>
            <person name="Choudhary M."/>
            <person name="Donohue T.J."/>
            <person name="Kaplan S."/>
        </authorList>
    </citation>
    <scope>NUCLEOTIDE SEQUENCE [LARGE SCALE GENOMIC DNA]</scope>
    <source>
        <strain>ATCC 17029 / ATH 2.4.9</strain>
    </source>
</reference>
<sequence>MPPVLRTVAELRARVSDWKAAGETVGVVPTMGALHEGHLSLARRARAACDRVIVTIFVNPRQFNNPADLEKYPRTEAQDAALLASVGVDAVFAPGPEEVYPRGFATNVSVSGVSEPLEGAHRPGHFDGVATVVAKLFGMTRADRAFFGEKDWQQLMVVRRLVADLNIPVTIEGCATVREADGLALSSRNRRLSAEGRARAPALVRAMQAATEAMRGGQAVPEALAEARAAVLAAGFETVDYLELRTADLLLPMERLEGRGRLLAAATLDGVRLIDNIPV</sequence>
<comment type="function">
    <text evidence="1">Catalyzes the condensation of pantoate with beta-alanine in an ATP-dependent reaction via a pantoyl-adenylate intermediate.</text>
</comment>
<comment type="catalytic activity">
    <reaction evidence="1">
        <text>(R)-pantoate + beta-alanine + ATP = (R)-pantothenate + AMP + diphosphate + H(+)</text>
        <dbReference type="Rhea" id="RHEA:10912"/>
        <dbReference type="ChEBI" id="CHEBI:15378"/>
        <dbReference type="ChEBI" id="CHEBI:15980"/>
        <dbReference type="ChEBI" id="CHEBI:29032"/>
        <dbReference type="ChEBI" id="CHEBI:30616"/>
        <dbReference type="ChEBI" id="CHEBI:33019"/>
        <dbReference type="ChEBI" id="CHEBI:57966"/>
        <dbReference type="ChEBI" id="CHEBI:456215"/>
        <dbReference type="EC" id="6.3.2.1"/>
    </reaction>
</comment>
<comment type="pathway">
    <text evidence="1">Cofactor biosynthesis; (R)-pantothenate biosynthesis; (R)-pantothenate from (R)-pantoate and beta-alanine: step 1/1.</text>
</comment>
<comment type="subunit">
    <text evidence="1">Homodimer.</text>
</comment>
<comment type="subcellular location">
    <subcellularLocation>
        <location evidence="1">Cytoplasm</location>
    </subcellularLocation>
</comment>
<comment type="miscellaneous">
    <text evidence="1">The reaction proceeds by a bi uni uni bi ping pong mechanism.</text>
</comment>
<comment type="similarity">
    <text evidence="1">Belongs to the pantothenate synthetase family.</text>
</comment>
<organism>
    <name type="scientific">Cereibacter sphaeroides (strain ATCC 17029 / ATH 2.4.9)</name>
    <name type="common">Rhodobacter sphaeroides</name>
    <dbReference type="NCBI Taxonomy" id="349101"/>
    <lineage>
        <taxon>Bacteria</taxon>
        <taxon>Pseudomonadati</taxon>
        <taxon>Pseudomonadota</taxon>
        <taxon>Alphaproteobacteria</taxon>
        <taxon>Rhodobacterales</taxon>
        <taxon>Paracoccaceae</taxon>
        <taxon>Cereibacter</taxon>
    </lineage>
</organism>
<accession>A3PGQ3</accession>
<keyword id="KW-0067">ATP-binding</keyword>
<keyword id="KW-0963">Cytoplasm</keyword>
<keyword id="KW-0436">Ligase</keyword>
<keyword id="KW-0547">Nucleotide-binding</keyword>
<keyword id="KW-0566">Pantothenate biosynthesis</keyword>
<protein>
    <recommendedName>
        <fullName evidence="1">Pantothenate synthetase</fullName>
        <shortName evidence="1">PS</shortName>
        <ecNumber evidence="1">6.3.2.1</ecNumber>
    </recommendedName>
    <alternativeName>
        <fullName evidence="1">Pantoate--beta-alanine ligase</fullName>
    </alternativeName>
    <alternativeName>
        <fullName evidence="1">Pantoate-activating enzyme</fullName>
    </alternativeName>
</protein>
<name>PANC_CERS1</name>
<gene>
    <name evidence="1" type="primary">panC</name>
    <name type="ordered locus">Rsph17029_0403</name>
</gene>
<dbReference type="EC" id="6.3.2.1" evidence="1"/>
<dbReference type="EMBL" id="CP000577">
    <property type="protein sequence ID" value="ABN75519.1"/>
    <property type="molecule type" value="Genomic_DNA"/>
</dbReference>
<dbReference type="RefSeq" id="WP_011840335.1">
    <property type="nucleotide sequence ID" value="NC_009049.1"/>
</dbReference>
<dbReference type="SMR" id="A3PGQ3"/>
<dbReference type="KEGG" id="rsh:Rsph17029_0403"/>
<dbReference type="HOGENOM" id="CLU_047148_0_0_5"/>
<dbReference type="UniPathway" id="UPA00028">
    <property type="reaction ID" value="UER00005"/>
</dbReference>
<dbReference type="GO" id="GO:0005829">
    <property type="term" value="C:cytosol"/>
    <property type="evidence" value="ECO:0007669"/>
    <property type="project" value="TreeGrafter"/>
</dbReference>
<dbReference type="GO" id="GO:0005524">
    <property type="term" value="F:ATP binding"/>
    <property type="evidence" value="ECO:0007669"/>
    <property type="project" value="UniProtKB-KW"/>
</dbReference>
<dbReference type="GO" id="GO:0004592">
    <property type="term" value="F:pantoate-beta-alanine ligase activity"/>
    <property type="evidence" value="ECO:0007669"/>
    <property type="project" value="UniProtKB-UniRule"/>
</dbReference>
<dbReference type="GO" id="GO:0015940">
    <property type="term" value="P:pantothenate biosynthetic process"/>
    <property type="evidence" value="ECO:0007669"/>
    <property type="project" value="UniProtKB-UniRule"/>
</dbReference>
<dbReference type="CDD" id="cd00560">
    <property type="entry name" value="PanC"/>
    <property type="match status" value="1"/>
</dbReference>
<dbReference type="FunFam" id="3.40.50.620:FF:000114">
    <property type="entry name" value="Pantothenate synthetase"/>
    <property type="match status" value="1"/>
</dbReference>
<dbReference type="Gene3D" id="3.40.50.620">
    <property type="entry name" value="HUPs"/>
    <property type="match status" value="1"/>
</dbReference>
<dbReference type="Gene3D" id="3.30.1300.10">
    <property type="entry name" value="Pantoate-beta-alanine ligase, C-terminal domain"/>
    <property type="match status" value="1"/>
</dbReference>
<dbReference type="HAMAP" id="MF_00158">
    <property type="entry name" value="PanC"/>
    <property type="match status" value="1"/>
</dbReference>
<dbReference type="InterPro" id="IPR004821">
    <property type="entry name" value="Cyt_trans-like"/>
</dbReference>
<dbReference type="InterPro" id="IPR003721">
    <property type="entry name" value="Pantoate_ligase"/>
</dbReference>
<dbReference type="InterPro" id="IPR042176">
    <property type="entry name" value="Pantoate_ligase_C"/>
</dbReference>
<dbReference type="InterPro" id="IPR014729">
    <property type="entry name" value="Rossmann-like_a/b/a_fold"/>
</dbReference>
<dbReference type="NCBIfam" id="TIGR00125">
    <property type="entry name" value="cyt_tran_rel"/>
    <property type="match status" value="1"/>
</dbReference>
<dbReference type="NCBIfam" id="TIGR00018">
    <property type="entry name" value="panC"/>
    <property type="match status" value="1"/>
</dbReference>
<dbReference type="PANTHER" id="PTHR21299">
    <property type="entry name" value="CYTIDYLATE KINASE/PANTOATE-BETA-ALANINE LIGASE"/>
    <property type="match status" value="1"/>
</dbReference>
<dbReference type="PANTHER" id="PTHR21299:SF1">
    <property type="entry name" value="PANTOATE--BETA-ALANINE LIGASE"/>
    <property type="match status" value="1"/>
</dbReference>
<dbReference type="Pfam" id="PF02569">
    <property type="entry name" value="Pantoate_ligase"/>
    <property type="match status" value="1"/>
</dbReference>
<dbReference type="SUPFAM" id="SSF52374">
    <property type="entry name" value="Nucleotidylyl transferase"/>
    <property type="match status" value="1"/>
</dbReference>
<evidence type="ECO:0000255" key="1">
    <source>
        <dbReference type="HAMAP-Rule" id="MF_00158"/>
    </source>
</evidence>
<feature type="chain" id="PRO_0000305528" description="Pantothenate synthetase">
    <location>
        <begin position="1"/>
        <end position="279"/>
    </location>
</feature>
<feature type="active site" description="Proton donor" evidence="1">
    <location>
        <position position="38"/>
    </location>
</feature>
<feature type="binding site" evidence="1">
    <location>
        <begin position="31"/>
        <end position="38"/>
    </location>
    <ligand>
        <name>ATP</name>
        <dbReference type="ChEBI" id="CHEBI:30616"/>
    </ligand>
</feature>
<feature type="binding site" evidence="1">
    <location>
        <position position="62"/>
    </location>
    <ligand>
        <name>(R)-pantoate</name>
        <dbReference type="ChEBI" id="CHEBI:15980"/>
    </ligand>
</feature>
<feature type="binding site" evidence="1">
    <location>
        <position position="62"/>
    </location>
    <ligand>
        <name>beta-alanine</name>
        <dbReference type="ChEBI" id="CHEBI:57966"/>
    </ligand>
</feature>
<feature type="binding site" evidence="1">
    <location>
        <begin position="148"/>
        <end position="151"/>
    </location>
    <ligand>
        <name>ATP</name>
        <dbReference type="ChEBI" id="CHEBI:30616"/>
    </ligand>
</feature>
<feature type="binding site" evidence="1">
    <location>
        <position position="154"/>
    </location>
    <ligand>
        <name>(R)-pantoate</name>
        <dbReference type="ChEBI" id="CHEBI:15980"/>
    </ligand>
</feature>
<feature type="binding site" evidence="1">
    <location>
        <position position="177"/>
    </location>
    <ligand>
        <name>ATP</name>
        <dbReference type="ChEBI" id="CHEBI:30616"/>
    </ligand>
</feature>
<feature type="binding site" evidence="1">
    <location>
        <begin position="185"/>
        <end position="188"/>
    </location>
    <ligand>
        <name>ATP</name>
        <dbReference type="ChEBI" id="CHEBI:30616"/>
    </ligand>
</feature>